<gene>
    <name type="ordered locus">VF_0641</name>
</gene>
<sequence length="425" mass="45046">MNSIWKQYIDILQGVVKPALGCTEPICAAYAASVATQMLGSKPETIDVFVSDNLYKNSMGVFVPRTGRVGLAIAAATGAIGGNPDAGLEVLAKITEEEVDEAQKLIDNGCVVVQRETTDEFIYCRVIAKNAVHNAEVTISGGHTLIIEKRLDDNVIFTLDSSLPKTSTASICDGVDITISSIYDFATQAEFDDIKFILEAKELNIALAQEGLNNPYGLEVGRTYQKNIEKGLLAKSLDSDILIYTSAASDARMGGATLPAMSNYGSGNQGIAATIPVVKMADFFNADDEKLARAFIMSHLGAIYIKSHYPPLSAFCGNAVTSAAASMAMVYLAGGTFEQSCSAIQNTISDTSGMICDGAKSTCAMKVGSSAQSAMKSALLALNDHCVTKQGVIADDVEKTIKNIGRMITTGMPNIDHEIIEIMAS</sequence>
<feature type="chain" id="PRO_0000339865" description="UPF0597 protein VF_0641">
    <location>
        <begin position="1"/>
        <end position="425"/>
    </location>
</feature>
<comment type="similarity">
    <text evidence="1">Belongs to the UPF0597 family.</text>
</comment>
<keyword id="KW-1185">Reference proteome</keyword>
<accession>Q5E760</accession>
<organism>
    <name type="scientific">Aliivibrio fischeri (strain ATCC 700601 / ES114)</name>
    <name type="common">Vibrio fischeri</name>
    <dbReference type="NCBI Taxonomy" id="312309"/>
    <lineage>
        <taxon>Bacteria</taxon>
        <taxon>Pseudomonadati</taxon>
        <taxon>Pseudomonadota</taxon>
        <taxon>Gammaproteobacteria</taxon>
        <taxon>Vibrionales</taxon>
        <taxon>Vibrionaceae</taxon>
        <taxon>Aliivibrio</taxon>
    </lineage>
</organism>
<proteinExistence type="inferred from homology"/>
<evidence type="ECO:0000255" key="1">
    <source>
        <dbReference type="HAMAP-Rule" id="MF_01845"/>
    </source>
</evidence>
<reference key="1">
    <citation type="journal article" date="2005" name="Proc. Natl. Acad. Sci. U.S.A.">
        <title>Complete genome sequence of Vibrio fischeri: a symbiotic bacterium with pathogenic congeners.</title>
        <authorList>
            <person name="Ruby E.G."/>
            <person name="Urbanowski M."/>
            <person name="Campbell J."/>
            <person name="Dunn A."/>
            <person name="Faini M."/>
            <person name="Gunsalus R."/>
            <person name="Lostroh P."/>
            <person name="Lupp C."/>
            <person name="McCann J."/>
            <person name="Millikan D."/>
            <person name="Schaefer A."/>
            <person name="Stabb E."/>
            <person name="Stevens A."/>
            <person name="Visick K."/>
            <person name="Whistler C."/>
            <person name="Greenberg E.P."/>
        </authorList>
    </citation>
    <scope>NUCLEOTIDE SEQUENCE [LARGE SCALE GENOMIC DNA]</scope>
    <source>
        <strain>ATCC 700601 / ES114</strain>
    </source>
</reference>
<dbReference type="EMBL" id="CP000020">
    <property type="protein sequence ID" value="AAW85136.1"/>
    <property type="molecule type" value="Genomic_DNA"/>
</dbReference>
<dbReference type="RefSeq" id="WP_005417964.1">
    <property type="nucleotide sequence ID" value="NC_006840.2"/>
</dbReference>
<dbReference type="RefSeq" id="YP_204024.1">
    <property type="nucleotide sequence ID" value="NC_006840.2"/>
</dbReference>
<dbReference type="SMR" id="Q5E760"/>
<dbReference type="STRING" id="312309.VF_0641"/>
<dbReference type="EnsemblBacteria" id="AAW85136">
    <property type="protein sequence ID" value="AAW85136"/>
    <property type="gene ID" value="VF_0641"/>
</dbReference>
<dbReference type="GeneID" id="54163294"/>
<dbReference type="KEGG" id="vfi:VF_0641"/>
<dbReference type="PATRIC" id="fig|312309.11.peg.633"/>
<dbReference type="eggNOG" id="COG3681">
    <property type="taxonomic scope" value="Bacteria"/>
</dbReference>
<dbReference type="HOGENOM" id="CLU_051840_0_0_6"/>
<dbReference type="OrthoDB" id="41906at2"/>
<dbReference type="Proteomes" id="UP000000537">
    <property type="component" value="Chromosome I"/>
</dbReference>
<dbReference type="GO" id="GO:0080146">
    <property type="term" value="F:L-cysteine desulfhydrase activity"/>
    <property type="evidence" value="ECO:0007669"/>
    <property type="project" value="TreeGrafter"/>
</dbReference>
<dbReference type="GO" id="GO:0019450">
    <property type="term" value="P:L-cysteine catabolic process to pyruvate"/>
    <property type="evidence" value="ECO:0007669"/>
    <property type="project" value="TreeGrafter"/>
</dbReference>
<dbReference type="HAMAP" id="MF_01845">
    <property type="entry name" value="UPF0597"/>
    <property type="match status" value="1"/>
</dbReference>
<dbReference type="InterPro" id="IPR005130">
    <property type="entry name" value="Ser_deHydtase-like_asu"/>
</dbReference>
<dbReference type="InterPro" id="IPR021144">
    <property type="entry name" value="UPF0597"/>
</dbReference>
<dbReference type="PANTHER" id="PTHR30501">
    <property type="entry name" value="UPF0597 PROTEIN YHAM"/>
    <property type="match status" value="1"/>
</dbReference>
<dbReference type="PANTHER" id="PTHR30501:SF2">
    <property type="entry name" value="UPF0597 PROTEIN YHAM"/>
    <property type="match status" value="1"/>
</dbReference>
<dbReference type="Pfam" id="PF03313">
    <property type="entry name" value="SDH_alpha"/>
    <property type="match status" value="1"/>
</dbReference>
<dbReference type="PIRSF" id="PIRSF006054">
    <property type="entry name" value="UCP006054"/>
    <property type="match status" value="1"/>
</dbReference>
<protein>
    <recommendedName>
        <fullName evidence="1">UPF0597 protein VF_0641</fullName>
    </recommendedName>
</protein>
<name>Y641_ALIF1</name>